<sequence length="147" mass="16262">MVHFTAEEKAAITSLWGKMNVEEAGGEALGRLLVVYPWTQRFFDNFGNLSSPSAILGNPKVKAHGKKVLTSFGDAIKNMDNLKTTFAKLSELHCDKLHVDPENFRLLGNVMVIILATHFGKEFTPEVQAAWQKLVSAVAIALGHKYH</sequence>
<evidence type="ECO:0000250" key="1">
    <source>
        <dbReference type="UniProtKB" id="P02100"/>
    </source>
</evidence>
<evidence type="ECO:0000255" key="2">
    <source>
        <dbReference type="PROSITE-ProRule" id="PRU00238"/>
    </source>
</evidence>
<dbReference type="EMBL" id="L25371">
    <property type="protein sequence ID" value="AAA35373.1"/>
    <property type="molecule type" value="Genomic_DNA"/>
</dbReference>
<dbReference type="SMR" id="P68016"/>
<dbReference type="GO" id="GO:0072562">
    <property type="term" value="C:blood microparticle"/>
    <property type="evidence" value="ECO:0007669"/>
    <property type="project" value="TreeGrafter"/>
</dbReference>
<dbReference type="GO" id="GO:0031838">
    <property type="term" value="C:haptoglobin-hemoglobin complex"/>
    <property type="evidence" value="ECO:0007669"/>
    <property type="project" value="TreeGrafter"/>
</dbReference>
<dbReference type="GO" id="GO:0005833">
    <property type="term" value="C:hemoglobin complex"/>
    <property type="evidence" value="ECO:0007669"/>
    <property type="project" value="InterPro"/>
</dbReference>
<dbReference type="GO" id="GO:0031720">
    <property type="term" value="F:haptoglobin binding"/>
    <property type="evidence" value="ECO:0007669"/>
    <property type="project" value="TreeGrafter"/>
</dbReference>
<dbReference type="GO" id="GO:0020037">
    <property type="term" value="F:heme binding"/>
    <property type="evidence" value="ECO:0007669"/>
    <property type="project" value="InterPro"/>
</dbReference>
<dbReference type="GO" id="GO:0031721">
    <property type="term" value="F:hemoglobin alpha binding"/>
    <property type="evidence" value="ECO:0007669"/>
    <property type="project" value="TreeGrafter"/>
</dbReference>
<dbReference type="GO" id="GO:0046872">
    <property type="term" value="F:metal ion binding"/>
    <property type="evidence" value="ECO:0007669"/>
    <property type="project" value="UniProtKB-KW"/>
</dbReference>
<dbReference type="GO" id="GO:0043177">
    <property type="term" value="F:organic acid binding"/>
    <property type="evidence" value="ECO:0007669"/>
    <property type="project" value="TreeGrafter"/>
</dbReference>
<dbReference type="GO" id="GO:0019825">
    <property type="term" value="F:oxygen binding"/>
    <property type="evidence" value="ECO:0007669"/>
    <property type="project" value="InterPro"/>
</dbReference>
<dbReference type="GO" id="GO:0005344">
    <property type="term" value="F:oxygen carrier activity"/>
    <property type="evidence" value="ECO:0007669"/>
    <property type="project" value="UniProtKB-KW"/>
</dbReference>
<dbReference type="GO" id="GO:0004601">
    <property type="term" value="F:peroxidase activity"/>
    <property type="evidence" value="ECO:0007669"/>
    <property type="project" value="TreeGrafter"/>
</dbReference>
<dbReference type="GO" id="GO:0042744">
    <property type="term" value="P:hydrogen peroxide catabolic process"/>
    <property type="evidence" value="ECO:0007669"/>
    <property type="project" value="TreeGrafter"/>
</dbReference>
<dbReference type="CDD" id="cd08925">
    <property type="entry name" value="Hb-beta-like"/>
    <property type="match status" value="1"/>
</dbReference>
<dbReference type="FunFam" id="1.10.490.10:FF:000001">
    <property type="entry name" value="Hemoglobin subunit beta"/>
    <property type="match status" value="1"/>
</dbReference>
<dbReference type="Gene3D" id="1.10.490.10">
    <property type="entry name" value="Globins"/>
    <property type="match status" value="1"/>
</dbReference>
<dbReference type="InterPro" id="IPR000971">
    <property type="entry name" value="Globin"/>
</dbReference>
<dbReference type="InterPro" id="IPR009050">
    <property type="entry name" value="Globin-like_sf"/>
</dbReference>
<dbReference type="InterPro" id="IPR012292">
    <property type="entry name" value="Globin/Proto"/>
</dbReference>
<dbReference type="InterPro" id="IPR002337">
    <property type="entry name" value="Hemoglobin_b"/>
</dbReference>
<dbReference type="InterPro" id="IPR050056">
    <property type="entry name" value="Hemoglobin_oxygen_transport"/>
</dbReference>
<dbReference type="PANTHER" id="PTHR11442">
    <property type="entry name" value="HEMOGLOBIN FAMILY MEMBER"/>
    <property type="match status" value="1"/>
</dbReference>
<dbReference type="PANTHER" id="PTHR11442:SF7">
    <property type="entry name" value="HEMOGLOBIN SUBUNIT EPSILON"/>
    <property type="match status" value="1"/>
</dbReference>
<dbReference type="Pfam" id="PF00042">
    <property type="entry name" value="Globin"/>
    <property type="match status" value="1"/>
</dbReference>
<dbReference type="PRINTS" id="PR00814">
    <property type="entry name" value="BETAHAEM"/>
</dbReference>
<dbReference type="SUPFAM" id="SSF46458">
    <property type="entry name" value="Globin-like"/>
    <property type="match status" value="1"/>
</dbReference>
<dbReference type="PROSITE" id="PS01033">
    <property type="entry name" value="GLOBIN"/>
    <property type="match status" value="1"/>
</dbReference>
<accession>P68016</accession>
<accession>P43350</accession>
<name>HBE_AOTAZ</name>
<comment type="function">
    <text>The epsilon chain is a beta-type chain of early mammalian embryonic hemoglobin.</text>
</comment>
<comment type="subunit">
    <text>Heterotetramer of two alpha chains and two epsilon chains in early embryonic hemoglobin Gower-2; two zeta chains and two epsilon chains in early embryonic hemoglobin Gower-1.</text>
</comment>
<comment type="tissue specificity">
    <text>Red blood cells.</text>
</comment>
<comment type="similarity">
    <text evidence="2">Belongs to the globin family.</text>
</comment>
<feature type="chain" id="PRO_0000053186" description="Hemoglobin subunit epsilon">
    <location>
        <begin position="1"/>
        <end position="147"/>
    </location>
</feature>
<feature type="domain" description="Globin" evidence="2">
    <location>
        <begin position="3"/>
        <end position="147"/>
    </location>
</feature>
<feature type="binding site" description="distal binding residue" evidence="2">
    <location>
        <position position="64"/>
    </location>
    <ligand>
        <name>heme b</name>
        <dbReference type="ChEBI" id="CHEBI:60344"/>
    </ligand>
    <ligandPart>
        <name>Fe</name>
        <dbReference type="ChEBI" id="CHEBI:18248"/>
    </ligandPart>
</feature>
<feature type="binding site" description="proximal binding residue" evidence="2">
    <location>
        <position position="93"/>
    </location>
    <ligand>
        <name>heme b</name>
        <dbReference type="ChEBI" id="CHEBI:60344"/>
    </ligand>
    <ligandPart>
        <name>Fe</name>
        <dbReference type="ChEBI" id="CHEBI:18248"/>
    </ligandPart>
</feature>
<feature type="modified residue" description="Phosphoserine" evidence="1">
    <location>
        <position position="14"/>
    </location>
</feature>
<feature type="modified residue" description="Phosphoserine" evidence="1">
    <location>
        <position position="51"/>
    </location>
</feature>
<proteinExistence type="evidence at transcript level"/>
<protein>
    <recommendedName>
        <fullName>Hemoglobin subunit epsilon</fullName>
    </recommendedName>
    <alternativeName>
        <fullName>Epsilon-globin</fullName>
    </alternativeName>
    <alternativeName>
        <fullName>Hemoglobin epsilon chain</fullName>
    </alternativeName>
</protein>
<keyword id="KW-0349">Heme</keyword>
<keyword id="KW-0408">Iron</keyword>
<keyword id="KW-0479">Metal-binding</keyword>
<keyword id="KW-0561">Oxygen transport</keyword>
<keyword id="KW-0597">Phosphoprotein</keyword>
<keyword id="KW-0813">Transport</keyword>
<gene>
    <name type="primary">HBE1</name>
</gene>
<organism>
    <name type="scientific">Aotus azarae</name>
    <name type="common">Azara's night monkey</name>
    <name type="synonym">Simia azarae</name>
    <dbReference type="NCBI Taxonomy" id="30591"/>
    <lineage>
        <taxon>Eukaryota</taxon>
        <taxon>Metazoa</taxon>
        <taxon>Chordata</taxon>
        <taxon>Craniata</taxon>
        <taxon>Vertebrata</taxon>
        <taxon>Euteleostomi</taxon>
        <taxon>Mammalia</taxon>
        <taxon>Eutheria</taxon>
        <taxon>Euarchontoglires</taxon>
        <taxon>Primates</taxon>
        <taxon>Haplorrhini</taxon>
        <taxon>Platyrrhini</taxon>
        <taxon>Aotidae</taxon>
        <taxon>Aotus</taxon>
    </lineage>
</organism>
<reference key="1">
    <citation type="journal article" date="1993" name="Mol. Phylogenet. Evol.">
        <title>Molecular phylogeny of the New World monkeys (Platyrrhini, primates).</title>
        <authorList>
            <person name="Schneider H."/>
            <person name="Schneider M.P.C."/>
            <person name="Sampaio I."/>
            <person name="Harada M.L."/>
            <person name="Stanhope M.J."/>
            <person name="Czekysbuaj J."/>
            <person name="Goodman M."/>
        </authorList>
    </citation>
    <scope>NUCLEOTIDE SEQUENCE [GENOMIC DNA]</scope>
    <source>
        <tissue>Lymphocyte</tissue>
    </source>
</reference>